<feature type="chain" id="PRO_1000019765" description="Serine--tRNA ligase">
    <location>
        <begin position="1"/>
        <end position="426"/>
    </location>
</feature>
<feature type="binding site" evidence="1">
    <location>
        <begin position="233"/>
        <end position="235"/>
    </location>
    <ligand>
        <name>L-serine</name>
        <dbReference type="ChEBI" id="CHEBI:33384"/>
    </ligand>
</feature>
<feature type="binding site" evidence="1">
    <location>
        <begin position="264"/>
        <end position="266"/>
    </location>
    <ligand>
        <name>ATP</name>
        <dbReference type="ChEBI" id="CHEBI:30616"/>
    </ligand>
</feature>
<feature type="binding site" evidence="1">
    <location>
        <position position="287"/>
    </location>
    <ligand>
        <name>L-serine</name>
        <dbReference type="ChEBI" id="CHEBI:33384"/>
    </ligand>
</feature>
<feature type="binding site" evidence="1">
    <location>
        <begin position="351"/>
        <end position="354"/>
    </location>
    <ligand>
        <name>ATP</name>
        <dbReference type="ChEBI" id="CHEBI:30616"/>
    </ligand>
</feature>
<feature type="binding site" evidence="1">
    <location>
        <position position="386"/>
    </location>
    <ligand>
        <name>L-serine</name>
        <dbReference type="ChEBI" id="CHEBI:33384"/>
    </ligand>
</feature>
<sequence>MIDQRLLRENPNLISEGLKSRGMDVDLGPLQKFCKDLKDLEEKRNSLQAQGNSIGKEVGQKIKQGLPHDSEEISNLRVKGNQIKKQVGIIEEEEKSISNKLNEQILCLPNLPEKNSLEGKNEKDNKELRRWGEPISGNTLKEHWEIANQLNLWDSERSSVIAKSRFVTLFKHAAKLERSLINFMLDLHIKKGYLEVLPPALVNTASLTGSGQLPKFAEESFRCADDDLWLTPTAEVPITSLHRGEIIPRDLLPLKYVAYSPCFRREAGSYGRDTRGLIRLHQFNKVELYWFSTPETSEDALEQITSDAESVLQELELPYRVIQLCTGDLGFSAKKTYDLEVWLPGANTFREISSCSNCGDFQARRSSIRTKDNNKKNILLHTLNGSGLAIGRTMAAILENGQQSDGSINLPKALIPYFGSNKLQPE</sequence>
<keyword id="KW-0030">Aminoacyl-tRNA synthetase</keyword>
<keyword id="KW-0067">ATP-binding</keyword>
<keyword id="KW-0963">Cytoplasm</keyword>
<keyword id="KW-0436">Ligase</keyword>
<keyword id="KW-0547">Nucleotide-binding</keyword>
<keyword id="KW-0648">Protein biosynthesis</keyword>
<dbReference type="EC" id="6.1.1.11" evidence="1"/>
<dbReference type="EMBL" id="CP000553">
    <property type="protein sequence ID" value="ABM76219.1"/>
    <property type="molecule type" value="Genomic_DNA"/>
</dbReference>
<dbReference type="RefSeq" id="WP_011824224.1">
    <property type="nucleotide sequence ID" value="NC_008819.1"/>
</dbReference>
<dbReference type="SMR" id="A2C409"/>
<dbReference type="KEGG" id="pme:NATL1_16621"/>
<dbReference type="eggNOG" id="COG0172">
    <property type="taxonomic scope" value="Bacteria"/>
</dbReference>
<dbReference type="HOGENOM" id="CLU_023797_1_1_3"/>
<dbReference type="UniPathway" id="UPA00906">
    <property type="reaction ID" value="UER00895"/>
</dbReference>
<dbReference type="Proteomes" id="UP000002592">
    <property type="component" value="Chromosome"/>
</dbReference>
<dbReference type="GO" id="GO:0005737">
    <property type="term" value="C:cytoplasm"/>
    <property type="evidence" value="ECO:0007669"/>
    <property type="project" value="UniProtKB-SubCell"/>
</dbReference>
<dbReference type="GO" id="GO:0005524">
    <property type="term" value="F:ATP binding"/>
    <property type="evidence" value="ECO:0007669"/>
    <property type="project" value="UniProtKB-UniRule"/>
</dbReference>
<dbReference type="GO" id="GO:0004828">
    <property type="term" value="F:serine-tRNA ligase activity"/>
    <property type="evidence" value="ECO:0007669"/>
    <property type="project" value="UniProtKB-UniRule"/>
</dbReference>
<dbReference type="GO" id="GO:0016260">
    <property type="term" value="P:selenocysteine biosynthetic process"/>
    <property type="evidence" value="ECO:0007669"/>
    <property type="project" value="UniProtKB-UniRule"/>
</dbReference>
<dbReference type="GO" id="GO:0006434">
    <property type="term" value="P:seryl-tRNA aminoacylation"/>
    <property type="evidence" value="ECO:0007669"/>
    <property type="project" value="UniProtKB-UniRule"/>
</dbReference>
<dbReference type="CDD" id="cd00770">
    <property type="entry name" value="SerRS_core"/>
    <property type="match status" value="1"/>
</dbReference>
<dbReference type="Gene3D" id="3.30.930.10">
    <property type="entry name" value="Bira Bifunctional Protein, Domain 2"/>
    <property type="match status" value="1"/>
</dbReference>
<dbReference type="Gene3D" id="1.10.287.40">
    <property type="entry name" value="Serine-tRNA synthetase, tRNA binding domain"/>
    <property type="match status" value="1"/>
</dbReference>
<dbReference type="HAMAP" id="MF_00176">
    <property type="entry name" value="Ser_tRNA_synth_type1"/>
    <property type="match status" value="1"/>
</dbReference>
<dbReference type="InterPro" id="IPR002314">
    <property type="entry name" value="aa-tRNA-synt_IIb"/>
</dbReference>
<dbReference type="InterPro" id="IPR006195">
    <property type="entry name" value="aa-tRNA-synth_II"/>
</dbReference>
<dbReference type="InterPro" id="IPR045864">
    <property type="entry name" value="aa-tRNA-synth_II/BPL/LPL"/>
</dbReference>
<dbReference type="InterPro" id="IPR002317">
    <property type="entry name" value="Ser-tRNA-ligase_type_1"/>
</dbReference>
<dbReference type="InterPro" id="IPR015866">
    <property type="entry name" value="Ser-tRNA-synth_1_N"/>
</dbReference>
<dbReference type="InterPro" id="IPR042103">
    <property type="entry name" value="SerRS_1_N_sf"/>
</dbReference>
<dbReference type="InterPro" id="IPR033729">
    <property type="entry name" value="SerRS_core"/>
</dbReference>
<dbReference type="InterPro" id="IPR010978">
    <property type="entry name" value="tRNA-bd_arm"/>
</dbReference>
<dbReference type="NCBIfam" id="TIGR00414">
    <property type="entry name" value="serS"/>
    <property type="match status" value="1"/>
</dbReference>
<dbReference type="PANTHER" id="PTHR43697:SF1">
    <property type="entry name" value="SERINE--TRNA LIGASE"/>
    <property type="match status" value="1"/>
</dbReference>
<dbReference type="PANTHER" id="PTHR43697">
    <property type="entry name" value="SERYL-TRNA SYNTHETASE"/>
    <property type="match status" value="1"/>
</dbReference>
<dbReference type="Pfam" id="PF02403">
    <property type="entry name" value="Seryl_tRNA_N"/>
    <property type="match status" value="1"/>
</dbReference>
<dbReference type="Pfam" id="PF00587">
    <property type="entry name" value="tRNA-synt_2b"/>
    <property type="match status" value="1"/>
</dbReference>
<dbReference type="PIRSF" id="PIRSF001529">
    <property type="entry name" value="Ser-tRNA-synth_IIa"/>
    <property type="match status" value="1"/>
</dbReference>
<dbReference type="PRINTS" id="PR00981">
    <property type="entry name" value="TRNASYNTHSER"/>
</dbReference>
<dbReference type="SUPFAM" id="SSF55681">
    <property type="entry name" value="Class II aaRS and biotin synthetases"/>
    <property type="match status" value="1"/>
</dbReference>
<dbReference type="SUPFAM" id="SSF46589">
    <property type="entry name" value="tRNA-binding arm"/>
    <property type="match status" value="1"/>
</dbReference>
<dbReference type="PROSITE" id="PS50862">
    <property type="entry name" value="AA_TRNA_LIGASE_II"/>
    <property type="match status" value="1"/>
</dbReference>
<accession>A2C409</accession>
<reference key="1">
    <citation type="journal article" date="2007" name="PLoS Genet.">
        <title>Patterns and implications of gene gain and loss in the evolution of Prochlorococcus.</title>
        <authorList>
            <person name="Kettler G.C."/>
            <person name="Martiny A.C."/>
            <person name="Huang K."/>
            <person name="Zucker J."/>
            <person name="Coleman M.L."/>
            <person name="Rodrigue S."/>
            <person name="Chen F."/>
            <person name="Lapidus A."/>
            <person name="Ferriera S."/>
            <person name="Johnson J."/>
            <person name="Steglich C."/>
            <person name="Church G.M."/>
            <person name="Richardson P."/>
            <person name="Chisholm S.W."/>
        </authorList>
    </citation>
    <scope>NUCLEOTIDE SEQUENCE [LARGE SCALE GENOMIC DNA]</scope>
    <source>
        <strain>NATL1A</strain>
    </source>
</reference>
<comment type="function">
    <text evidence="1">Catalyzes the attachment of serine to tRNA(Ser). Is also able to aminoacylate tRNA(Sec) with serine, to form the misacylated tRNA L-seryl-tRNA(Sec), which will be further converted into selenocysteinyl-tRNA(Sec).</text>
</comment>
<comment type="catalytic activity">
    <reaction evidence="1">
        <text>tRNA(Ser) + L-serine + ATP = L-seryl-tRNA(Ser) + AMP + diphosphate + H(+)</text>
        <dbReference type="Rhea" id="RHEA:12292"/>
        <dbReference type="Rhea" id="RHEA-COMP:9669"/>
        <dbReference type="Rhea" id="RHEA-COMP:9703"/>
        <dbReference type="ChEBI" id="CHEBI:15378"/>
        <dbReference type="ChEBI" id="CHEBI:30616"/>
        <dbReference type="ChEBI" id="CHEBI:33019"/>
        <dbReference type="ChEBI" id="CHEBI:33384"/>
        <dbReference type="ChEBI" id="CHEBI:78442"/>
        <dbReference type="ChEBI" id="CHEBI:78533"/>
        <dbReference type="ChEBI" id="CHEBI:456215"/>
        <dbReference type="EC" id="6.1.1.11"/>
    </reaction>
</comment>
<comment type="catalytic activity">
    <reaction evidence="1">
        <text>tRNA(Sec) + L-serine + ATP = L-seryl-tRNA(Sec) + AMP + diphosphate + H(+)</text>
        <dbReference type="Rhea" id="RHEA:42580"/>
        <dbReference type="Rhea" id="RHEA-COMP:9742"/>
        <dbReference type="Rhea" id="RHEA-COMP:10128"/>
        <dbReference type="ChEBI" id="CHEBI:15378"/>
        <dbReference type="ChEBI" id="CHEBI:30616"/>
        <dbReference type="ChEBI" id="CHEBI:33019"/>
        <dbReference type="ChEBI" id="CHEBI:33384"/>
        <dbReference type="ChEBI" id="CHEBI:78442"/>
        <dbReference type="ChEBI" id="CHEBI:78533"/>
        <dbReference type="ChEBI" id="CHEBI:456215"/>
        <dbReference type="EC" id="6.1.1.11"/>
    </reaction>
</comment>
<comment type="pathway">
    <text evidence="1">Aminoacyl-tRNA biosynthesis; selenocysteinyl-tRNA(Sec) biosynthesis; L-seryl-tRNA(Sec) from L-serine and tRNA(Sec): step 1/1.</text>
</comment>
<comment type="subunit">
    <text evidence="1">Homodimer. The tRNA molecule binds across the dimer.</text>
</comment>
<comment type="subcellular location">
    <subcellularLocation>
        <location evidence="1">Cytoplasm</location>
    </subcellularLocation>
</comment>
<comment type="domain">
    <text evidence="1">Consists of two distinct domains, a catalytic core and a N-terminal extension that is involved in tRNA binding.</text>
</comment>
<comment type="similarity">
    <text evidence="1">Belongs to the class-II aminoacyl-tRNA synthetase family. Type-1 seryl-tRNA synthetase subfamily.</text>
</comment>
<gene>
    <name evidence="1" type="primary">serS</name>
    <name type="ordered locus">NATL1_16621</name>
</gene>
<name>SYS_PROM1</name>
<proteinExistence type="inferred from homology"/>
<protein>
    <recommendedName>
        <fullName evidence="1">Serine--tRNA ligase</fullName>
        <ecNumber evidence="1">6.1.1.11</ecNumber>
    </recommendedName>
    <alternativeName>
        <fullName evidence="1">Seryl-tRNA synthetase</fullName>
        <shortName evidence="1">SerRS</shortName>
    </alternativeName>
    <alternativeName>
        <fullName evidence="1">Seryl-tRNA(Ser/Sec) synthetase</fullName>
    </alternativeName>
</protein>
<evidence type="ECO:0000255" key="1">
    <source>
        <dbReference type="HAMAP-Rule" id="MF_00176"/>
    </source>
</evidence>
<organism>
    <name type="scientific">Prochlorococcus marinus (strain NATL1A)</name>
    <dbReference type="NCBI Taxonomy" id="167555"/>
    <lineage>
        <taxon>Bacteria</taxon>
        <taxon>Bacillati</taxon>
        <taxon>Cyanobacteriota</taxon>
        <taxon>Cyanophyceae</taxon>
        <taxon>Synechococcales</taxon>
        <taxon>Prochlorococcaceae</taxon>
        <taxon>Prochlorococcus</taxon>
    </lineage>
</organism>